<dbReference type="EMBL" id="CR628337">
    <property type="protein sequence ID" value="CAH15910.1"/>
    <property type="molecule type" value="Genomic_DNA"/>
</dbReference>
<dbReference type="RefSeq" id="WP_010947438.1">
    <property type="nucleotide sequence ID" value="NC_006369.1"/>
</dbReference>
<dbReference type="SMR" id="Q5WVZ0"/>
<dbReference type="GeneID" id="57035700"/>
<dbReference type="KEGG" id="lpf:lpl1670"/>
<dbReference type="LegioList" id="lpl1670"/>
<dbReference type="HOGENOM" id="CLU_073981_2_1_6"/>
<dbReference type="Proteomes" id="UP000002517">
    <property type="component" value="Chromosome"/>
</dbReference>
<dbReference type="GO" id="GO:0005829">
    <property type="term" value="C:cytosol"/>
    <property type="evidence" value="ECO:0007669"/>
    <property type="project" value="GOC"/>
</dbReference>
<dbReference type="GO" id="GO:0043023">
    <property type="term" value="F:ribosomal large subunit binding"/>
    <property type="evidence" value="ECO:0007669"/>
    <property type="project" value="TreeGrafter"/>
</dbReference>
<dbReference type="GO" id="GO:0002184">
    <property type="term" value="P:cytoplasmic translational termination"/>
    <property type="evidence" value="ECO:0007669"/>
    <property type="project" value="TreeGrafter"/>
</dbReference>
<dbReference type="CDD" id="cd00520">
    <property type="entry name" value="RRF"/>
    <property type="match status" value="1"/>
</dbReference>
<dbReference type="FunFam" id="1.10.132.20:FF:000001">
    <property type="entry name" value="Ribosome-recycling factor"/>
    <property type="match status" value="1"/>
</dbReference>
<dbReference type="FunFam" id="3.30.1360.40:FF:000001">
    <property type="entry name" value="Ribosome-recycling factor"/>
    <property type="match status" value="1"/>
</dbReference>
<dbReference type="Gene3D" id="3.30.1360.40">
    <property type="match status" value="1"/>
</dbReference>
<dbReference type="Gene3D" id="1.10.132.20">
    <property type="entry name" value="Ribosome-recycling factor"/>
    <property type="match status" value="1"/>
</dbReference>
<dbReference type="HAMAP" id="MF_00040">
    <property type="entry name" value="RRF"/>
    <property type="match status" value="1"/>
</dbReference>
<dbReference type="InterPro" id="IPR002661">
    <property type="entry name" value="Ribosome_recyc_fac"/>
</dbReference>
<dbReference type="InterPro" id="IPR023584">
    <property type="entry name" value="Ribosome_recyc_fac_dom"/>
</dbReference>
<dbReference type="InterPro" id="IPR036191">
    <property type="entry name" value="RRF_sf"/>
</dbReference>
<dbReference type="NCBIfam" id="TIGR00496">
    <property type="entry name" value="frr"/>
    <property type="match status" value="1"/>
</dbReference>
<dbReference type="PANTHER" id="PTHR20982:SF3">
    <property type="entry name" value="MITOCHONDRIAL RIBOSOME RECYCLING FACTOR PSEUDO 1"/>
    <property type="match status" value="1"/>
</dbReference>
<dbReference type="PANTHER" id="PTHR20982">
    <property type="entry name" value="RIBOSOME RECYCLING FACTOR"/>
    <property type="match status" value="1"/>
</dbReference>
<dbReference type="Pfam" id="PF01765">
    <property type="entry name" value="RRF"/>
    <property type="match status" value="1"/>
</dbReference>
<dbReference type="SUPFAM" id="SSF55194">
    <property type="entry name" value="Ribosome recycling factor, RRF"/>
    <property type="match status" value="1"/>
</dbReference>
<sequence length="185" mass="20863">MINEIKQDSEKRMKKTIEALHTDMSKIRTGRANASLLDHVMVDYYGSPTPLSQVANITTSDSRTILVTPWEKSMVAAIEKAILNSDLGLNPATAGTAIRVPMPPLTEERRKELIKVVRHEGEQGRVSIRNIRRDANNQLKELVKEKAISEDDERRAAEAIQKLTDRYISEVDAVLAEKEKDLMEI</sequence>
<evidence type="ECO:0000255" key="1">
    <source>
        <dbReference type="HAMAP-Rule" id="MF_00040"/>
    </source>
</evidence>
<comment type="function">
    <text evidence="1">Responsible for the release of ribosomes from messenger RNA at the termination of protein biosynthesis. May increase the efficiency of translation by recycling ribosomes from one round of translation to another.</text>
</comment>
<comment type="subcellular location">
    <subcellularLocation>
        <location evidence="1">Cytoplasm</location>
    </subcellularLocation>
</comment>
<comment type="similarity">
    <text evidence="1">Belongs to the RRF family.</text>
</comment>
<name>RRF_LEGPL</name>
<organism>
    <name type="scientific">Legionella pneumophila (strain Lens)</name>
    <dbReference type="NCBI Taxonomy" id="297245"/>
    <lineage>
        <taxon>Bacteria</taxon>
        <taxon>Pseudomonadati</taxon>
        <taxon>Pseudomonadota</taxon>
        <taxon>Gammaproteobacteria</taxon>
        <taxon>Legionellales</taxon>
        <taxon>Legionellaceae</taxon>
        <taxon>Legionella</taxon>
    </lineage>
</organism>
<reference key="1">
    <citation type="journal article" date="2004" name="Nat. Genet.">
        <title>Evidence in the Legionella pneumophila genome for exploitation of host cell functions and high genome plasticity.</title>
        <authorList>
            <person name="Cazalet C."/>
            <person name="Rusniok C."/>
            <person name="Brueggemann H."/>
            <person name="Zidane N."/>
            <person name="Magnier A."/>
            <person name="Ma L."/>
            <person name="Tichit M."/>
            <person name="Jarraud S."/>
            <person name="Bouchier C."/>
            <person name="Vandenesch F."/>
            <person name="Kunst F."/>
            <person name="Etienne J."/>
            <person name="Glaser P."/>
            <person name="Buchrieser C."/>
        </authorList>
    </citation>
    <scope>NUCLEOTIDE SEQUENCE [LARGE SCALE GENOMIC DNA]</scope>
    <source>
        <strain>Lens</strain>
    </source>
</reference>
<protein>
    <recommendedName>
        <fullName evidence="1">Ribosome-recycling factor</fullName>
        <shortName evidence="1">RRF</shortName>
    </recommendedName>
    <alternativeName>
        <fullName evidence="1">Ribosome-releasing factor</fullName>
    </alternativeName>
</protein>
<keyword id="KW-0963">Cytoplasm</keyword>
<keyword id="KW-0648">Protein biosynthesis</keyword>
<feature type="chain" id="PRO_0000167480" description="Ribosome-recycling factor">
    <location>
        <begin position="1"/>
        <end position="185"/>
    </location>
</feature>
<accession>Q5WVZ0</accession>
<gene>
    <name evidence="1" type="primary">frr</name>
    <name type="ordered locus">lpl1670</name>
</gene>
<proteinExistence type="inferred from homology"/>